<dbReference type="EMBL" id="CP000395">
    <property type="protein sequence ID" value="ABH01973.1"/>
    <property type="molecule type" value="Genomic_DNA"/>
</dbReference>
<dbReference type="EMBL" id="CP002933">
    <property type="protein sequence ID" value="AEL69919.1"/>
    <property type="molecule type" value="Genomic_DNA"/>
</dbReference>
<dbReference type="RefSeq" id="WP_004789448.1">
    <property type="nucleotide sequence ID" value="NZ_CP160066.1"/>
</dbReference>
<dbReference type="SMR" id="Q0SMF5"/>
<dbReference type="STRING" id="29518.BLA32_00740"/>
<dbReference type="GeneID" id="77265552"/>
<dbReference type="KEGG" id="baf:BAPKO_0743"/>
<dbReference type="KEGG" id="bafz:BafPKo_0724"/>
<dbReference type="PATRIC" id="fig|390236.22.peg.691"/>
<dbReference type="eggNOG" id="COG0335">
    <property type="taxonomic scope" value="Bacteria"/>
</dbReference>
<dbReference type="HOGENOM" id="CLU_103507_2_2_12"/>
<dbReference type="OrthoDB" id="9803541at2"/>
<dbReference type="Proteomes" id="UP000005216">
    <property type="component" value="Chromosome"/>
</dbReference>
<dbReference type="GO" id="GO:0022625">
    <property type="term" value="C:cytosolic large ribosomal subunit"/>
    <property type="evidence" value="ECO:0007669"/>
    <property type="project" value="TreeGrafter"/>
</dbReference>
<dbReference type="GO" id="GO:0003735">
    <property type="term" value="F:structural constituent of ribosome"/>
    <property type="evidence" value="ECO:0007669"/>
    <property type="project" value="InterPro"/>
</dbReference>
<dbReference type="GO" id="GO:0006412">
    <property type="term" value="P:translation"/>
    <property type="evidence" value="ECO:0007669"/>
    <property type="project" value="UniProtKB-UniRule"/>
</dbReference>
<dbReference type="Gene3D" id="2.30.30.790">
    <property type="match status" value="1"/>
</dbReference>
<dbReference type="HAMAP" id="MF_00402">
    <property type="entry name" value="Ribosomal_bL19"/>
    <property type="match status" value="1"/>
</dbReference>
<dbReference type="InterPro" id="IPR001857">
    <property type="entry name" value="Ribosomal_bL19"/>
</dbReference>
<dbReference type="InterPro" id="IPR018257">
    <property type="entry name" value="Ribosomal_bL19_CS"/>
</dbReference>
<dbReference type="InterPro" id="IPR038657">
    <property type="entry name" value="Ribosomal_bL19_sf"/>
</dbReference>
<dbReference type="InterPro" id="IPR008991">
    <property type="entry name" value="Translation_prot_SH3-like_sf"/>
</dbReference>
<dbReference type="NCBIfam" id="TIGR01024">
    <property type="entry name" value="rplS_bact"/>
    <property type="match status" value="1"/>
</dbReference>
<dbReference type="PANTHER" id="PTHR15680:SF9">
    <property type="entry name" value="LARGE RIBOSOMAL SUBUNIT PROTEIN BL19M"/>
    <property type="match status" value="1"/>
</dbReference>
<dbReference type="PANTHER" id="PTHR15680">
    <property type="entry name" value="RIBOSOMAL PROTEIN L19"/>
    <property type="match status" value="1"/>
</dbReference>
<dbReference type="Pfam" id="PF01245">
    <property type="entry name" value="Ribosomal_L19"/>
    <property type="match status" value="1"/>
</dbReference>
<dbReference type="PIRSF" id="PIRSF002191">
    <property type="entry name" value="Ribosomal_L19"/>
    <property type="match status" value="1"/>
</dbReference>
<dbReference type="PRINTS" id="PR00061">
    <property type="entry name" value="RIBOSOMALL19"/>
</dbReference>
<dbReference type="SUPFAM" id="SSF50104">
    <property type="entry name" value="Translation proteins SH3-like domain"/>
    <property type="match status" value="1"/>
</dbReference>
<dbReference type="PROSITE" id="PS01015">
    <property type="entry name" value="RIBOSOMAL_L19"/>
    <property type="match status" value="1"/>
</dbReference>
<reference key="1">
    <citation type="journal article" date="2006" name="BMC Genomics">
        <title>Comparative genome analysis: selection pressure on the Borrelia vls cassettes is essential for infectivity.</title>
        <authorList>
            <person name="Gloeckner G."/>
            <person name="Schulte-Spechtel U."/>
            <person name="Schilhabel M."/>
            <person name="Felder M."/>
            <person name="Suehnel J."/>
            <person name="Wilske B."/>
            <person name="Platzer M."/>
        </authorList>
    </citation>
    <scope>NUCLEOTIDE SEQUENCE [LARGE SCALE GENOMIC DNA]</scope>
    <source>
        <strain>PKo</strain>
    </source>
</reference>
<reference key="2">
    <citation type="journal article" date="2011" name="J. Bacteriol.">
        <title>Whole-genome sequences of two Borrelia afzelii and two Borrelia garinii Lyme disease agent isolates.</title>
        <authorList>
            <person name="Casjens S.R."/>
            <person name="Mongodin E.F."/>
            <person name="Qiu W.G."/>
            <person name="Dunn J.J."/>
            <person name="Luft B.J."/>
            <person name="Fraser-Liggett C.M."/>
            <person name="Schutzer S.E."/>
        </authorList>
    </citation>
    <scope>NUCLEOTIDE SEQUENCE [LARGE SCALE GENOMIC DNA]</scope>
    <source>
        <strain>PKo</strain>
    </source>
</reference>
<proteinExistence type="inferred from homology"/>
<name>RL19_BORAP</name>
<comment type="function">
    <text evidence="1">This protein is located at the 30S-50S ribosomal subunit interface and may play a role in the structure and function of the aminoacyl-tRNA binding site.</text>
</comment>
<comment type="similarity">
    <text evidence="1">Belongs to the bacterial ribosomal protein bL19 family.</text>
</comment>
<gene>
    <name evidence="1" type="primary">rplS</name>
    <name type="ordered locus">BAPKO_0743</name>
    <name type="ordered locus">BafPKo_0724</name>
</gene>
<organism>
    <name type="scientific">Borreliella afzelii (strain PKo)</name>
    <name type="common">Borrelia afzelii</name>
    <dbReference type="NCBI Taxonomy" id="390236"/>
    <lineage>
        <taxon>Bacteria</taxon>
        <taxon>Pseudomonadati</taxon>
        <taxon>Spirochaetota</taxon>
        <taxon>Spirochaetia</taxon>
        <taxon>Spirochaetales</taxon>
        <taxon>Borreliaceae</taxon>
        <taxon>Borreliella</taxon>
    </lineage>
</organism>
<feature type="chain" id="PRO_1000049638" description="Large ribosomal subunit protein bL19">
    <location>
        <begin position="1"/>
        <end position="119"/>
    </location>
</feature>
<sequence>MDLIRKIEAQNKKNEAFVFNVGDTVKVVYKIIEGNNERLQSFEGIIISFQNKGIGKTFLVRKISSGIGVEKIFPVYSPIIEKVEVLRRGKVRRAKLYYMRNRIGKAAMKIKERLNFKRS</sequence>
<protein>
    <recommendedName>
        <fullName evidence="1">Large ribosomal subunit protein bL19</fullName>
    </recommendedName>
    <alternativeName>
        <fullName evidence="2">50S ribosomal protein L19</fullName>
    </alternativeName>
</protein>
<keyword id="KW-0687">Ribonucleoprotein</keyword>
<keyword id="KW-0689">Ribosomal protein</keyword>
<accession>Q0SMF5</accession>
<accession>G0IRF3</accession>
<evidence type="ECO:0000255" key="1">
    <source>
        <dbReference type="HAMAP-Rule" id="MF_00402"/>
    </source>
</evidence>
<evidence type="ECO:0000305" key="2"/>